<organism>
    <name type="scientific">Actinobacillus pleuropneumoniae serotype 3 (strain JL03)</name>
    <dbReference type="NCBI Taxonomy" id="434271"/>
    <lineage>
        <taxon>Bacteria</taxon>
        <taxon>Pseudomonadati</taxon>
        <taxon>Pseudomonadota</taxon>
        <taxon>Gammaproteobacteria</taxon>
        <taxon>Pasteurellales</taxon>
        <taxon>Pasteurellaceae</taxon>
        <taxon>Actinobacillus</taxon>
    </lineage>
</organism>
<sequence length="348" mass="37722">MFKMVSSPHTHSSNLTAKFMLWVMVAMLPALGMQAYFFGYGVFIQVFIALLLAVAIEIAIAKLRRKLTAFYVADLSGVLTALILAISIPPYAPYWIIVIGIIVALLLAKHSYGGLGQNLFNPAMVAYALLLVSFPVQMTGWLVPIDLLNEPPTFGDAISLVFSGVTSDGFSVHQLLGSVDGIAQATPLDSAKTSMQKLGVEGVLQSPIFSGLFANGWWQINLAFLAGGLLLIYKRIIHWQIPAAMLGMFALLSGLTDLLLPHTHLNVVSQLFSGAMMFGAFFIATDPVTASITPRGKLIFGGLIGLFVYLIRYYGNYPDAVAFSVLLANICVPLIDHYTQPRLYGTGR</sequence>
<accession>B0BS74</accession>
<dbReference type="EC" id="7.-.-.-" evidence="1"/>
<dbReference type="EMBL" id="CP000687">
    <property type="protein sequence ID" value="ABY68774.1"/>
    <property type="molecule type" value="Genomic_DNA"/>
</dbReference>
<dbReference type="RefSeq" id="WP_012262722.1">
    <property type="nucleotide sequence ID" value="NC_010278.1"/>
</dbReference>
<dbReference type="SMR" id="B0BS74"/>
<dbReference type="KEGG" id="apj:APJL_0170"/>
<dbReference type="HOGENOM" id="CLU_042020_0_0_6"/>
<dbReference type="Proteomes" id="UP000008547">
    <property type="component" value="Chromosome"/>
</dbReference>
<dbReference type="GO" id="GO:0005886">
    <property type="term" value="C:plasma membrane"/>
    <property type="evidence" value="ECO:0007669"/>
    <property type="project" value="UniProtKB-SubCell"/>
</dbReference>
<dbReference type="GO" id="GO:0022900">
    <property type="term" value="P:electron transport chain"/>
    <property type="evidence" value="ECO:0007669"/>
    <property type="project" value="UniProtKB-UniRule"/>
</dbReference>
<dbReference type="GO" id="GO:0055085">
    <property type="term" value="P:transmembrane transport"/>
    <property type="evidence" value="ECO:0007669"/>
    <property type="project" value="InterPro"/>
</dbReference>
<dbReference type="HAMAP" id="MF_00462">
    <property type="entry name" value="RsxD_RnfD"/>
    <property type="match status" value="1"/>
</dbReference>
<dbReference type="InterPro" id="IPR004338">
    <property type="entry name" value="NqrB/RnfD"/>
</dbReference>
<dbReference type="InterPro" id="IPR011303">
    <property type="entry name" value="RnfD_bac"/>
</dbReference>
<dbReference type="NCBIfam" id="NF002011">
    <property type="entry name" value="PRK00816.1"/>
    <property type="match status" value="1"/>
</dbReference>
<dbReference type="NCBIfam" id="TIGR01946">
    <property type="entry name" value="rnfD"/>
    <property type="match status" value="1"/>
</dbReference>
<dbReference type="PANTHER" id="PTHR30578">
    <property type="entry name" value="ELECTRON TRANSPORT COMPLEX PROTEIN RNFD"/>
    <property type="match status" value="1"/>
</dbReference>
<dbReference type="PANTHER" id="PTHR30578:SF0">
    <property type="entry name" value="ION-TRANSLOCATING OXIDOREDUCTASE COMPLEX SUBUNIT D"/>
    <property type="match status" value="1"/>
</dbReference>
<dbReference type="Pfam" id="PF03116">
    <property type="entry name" value="NQR2_RnfD_RnfE"/>
    <property type="match status" value="1"/>
</dbReference>
<proteinExistence type="inferred from homology"/>
<reference key="1">
    <citation type="journal article" date="2008" name="PLoS ONE">
        <title>Genome biology of Actinobacillus pleuropneumoniae JL03, an isolate of serotype 3 prevalent in China.</title>
        <authorList>
            <person name="Xu Z."/>
            <person name="Zhou Y."/>
            <person name="Li L."/>
            <person name="Zhou R."/>
            <person name="Xiao S."/>
            <person name="Wan Y."/>
            <person name="Zhang S."/>
            <person name="Wang K."/>
            <person name="Li W."/>
            <person name="Li L."/>
            <person name="Jin H."/>
            <person name="Kang M."/>
            <person name="Dalai B."/>
            <person name="Li T."/>
            <person name="Liu L."/>
            <person name="Cheng Y."/>
            <person name="Zhang L."/>
            <person name="Xu T."/>
            <person name="Zheng H."/>
            <person name="Pu S."/>
            <person name="Wang B."/>
            <person name="Gu W."/>
            <person name="Zhang X.L."/>
            <person name="Zhu G.-F."/>
            <person name="Wang S."/>
            <person name="Zhao G.-P."/>
            <person name="Chen H."/>
        </authorList>
    </citation>
    <scope>NUCLEOTIDE SEQUENCE [LARGE SCALE GENOMIC DNA]</scope>
    <source>
        <strain>JL03</strain>
    </source>
</reference>
<name>RNFD_ACTPJ</name>
<protein>
    <recommendedName>
        <fullName evidence="1">Ion-translocating oxidoreductase complex subunit D</fullName>
        <ecNumber evidence="1">7.-.-.-</ecNumber>
    </recommendedName>
    <alternativeName>
        <fullName evidence="1">Rnf electron transport complex subunit D</fullName>
    </alternativeName>
</protein>
<comment type="function">
    <text evidence="1">Part of a membrane-bound complex that couples electron transfer with translocation of ions across the membrane.</text>
</comment>
<comment type="cofactor">
    <cofactor evidence="1">
        <name>FMN</name>
        <dbReference type="ChEBI" id="CHEBI:58210"/>
    </cofactor>
</comment>
<comment type="subunit">
    <text evidence="1">The complex is composed of six subunits: RnfA, RnfB, RnfC, RnfD, RnfE and RnfG.</text>
</comment>
<comment type="subcellular location">
    <subcellularLocation>
        <location evidence="1">Cell inner membrane</location>
        <topology evidence="1">Multi-pass membrane protein</topology>
    </subcellularLocation>
</comment>
<comment type="similarity">
    <text evidence="1">Belongs to the NqrB/RnfD family.</text>
</comment>
<gene>
    <name evidence="1" type="primary">rnfD</name>
    <name type="ordered locus">APJL_0170</name>
</gene>
<keyword id="KW-0997">Cell inner membrane</keyword>
<keyword id="KW-1003">Cell membrane</keyword>
<keyword id="KW-0249">Electron transport</keyword>
<keyword id="KW-0285">Flavoprotein</keyword>
<keyword id="KW-0288">FMN</keyword>
<keyword id="KW-0472">Membrane</keyword>
<keyword id="KW-0597">Phosphoprotein</keyword>
<keyword id="KW-1278">Translocase</keyword>
<keyword id="KW-0812">Transmembrane</keyword>
<keyword id="KW-1133">Transmembrane helix</keyword>
<keyword id="KW-0813">Transport</keyword>
<feature type="chain" id="PRO_1000125374" description="Ion-translocating oxidoreductase complex subunit D">
    <location>
        <begin position="1"/>
        <end position="348"/>
    </location>
</feature>
<feature type="transmembrane region" description="Helical" evidence="1">
    <location>
        <begin position="15"/>
        <end position="35"/>
    </location>
</feature>
<feature type="transmembrane region" description="Helical" evidence="1">
    <location>
        <begin position="36"/>
        <end position="56"/>
    </location>
</feature>
<feature type="transmembrane region" description="Helical" evidence="1">
    <location>
        <begin position="67"/>
        <end position="87"/>
    </location>
</feature>
<feature type="transmembrane region" description="Helical" evidence="1">
    <location>
        <begin position="88"/>
        <end position="108"/>
    </location>
</feature>
<feature type="transmembrane region" description="Helical" evidence="1">
    <location>
        <begin position="125"/>
        <end position="145"/>
    </location>
</feature>
<feature type="transmembrane region" description="Helical" evidence="1">
    <location>
        <begin position="212"/>
        <end position="232"/>
    </location>
</feature>
<feature type="transmembrane region" description="Helical" evidence="1">
    <location>
        <begin position="241"/>
        <end position="261"/>
    </location>
</feature>
<feature type="transmembrane region" description="Helical" evidence="1">
    <location>
        <begin position="265"/>
        <end position="285"/>
    </location>
</feature>
<feature type="transmembrane region" description="Helical" evidence="1">
    <location>
        <begin position="298"/>
        <end position="318"/>
    </location>
</feature>
<feature type="transmembrane region" description="Helical" evidence="1">
    <location>
        <begin position="320"/>
        <end position="340"/>
    </location>
</feature>
<feature type="modified residue" description="FMN phosphoryl threonine" evidence="1">
    <location>
        <position position="186"/>
    </location>
</feature>
<evidence type="ECO:0000255" key="1">
    <source>
        <dbReference type="HAMAP-Rule" id="MF_00462"/>
    </source>
</evidence>